<sequence>MEDQPKDREAEVAGPWFSKWERQCLAEAEQAEQLSPELQEEAAADAAGLKIERQRLWHLFQISATAVAQLYKDSGCQQPGLSMWDPFQNAAMAVTSLYKESGDAYQRSFELGVQVGYQRRVRDVLEWVKKGRSIIRREDLISFLCGKVPPTPQPPRTPRMSPRPPAAASTQAAATESGTPVGVDLQPFHEAIALHGLSGAMASISMRSGPPGSSSQDGGIASSGRWKSSFLENDPNSLSSEELTLLLDSGGVRKRTSAQFGDGSADSPLHKRNRMV</sequence>
<keyword id="KW-0539">Nucleus</keyword>
<keyword id="KW-1185">Reference proteome</keyword>
<gene>
    <name evidence="1" type="primary">Hapstr2</name>
    <name evidence="4" type="synonym">Gm715</name>
</gene>
<accession>A0A804C8T0</accession>
<comment type="function">
    <text evidence="1">Together with HAPSTR1 plays a central regulatory role in the cellular response to molecular stressors, such as DNA damage, nutrient scarcity, and protein misfolding. Regulates these multiple stress response signaling pathways by stabilizing HAPSTR1, but also independently of HAPSTR1.</text>
</comment>
<comment type="subunit">
    <text evidence="1">Homooligomer. Heterooligomer with HAPSTR1; the interaction is direct and stabilizes HAPSTR1 independently of HUWE1. Interacts with HUWE1.</text>
</comment>
<comment type="subcellular location">
    <subcellularLocation>
        <location evidence="1">Nucleus</location>
    </subcellularLocation>
</comment>
<comment type="similarity">
    <text evidence="3">Belongs to the HAPSTR1 family.</text>
</comment>
<proteinExistence type="inferred from homology"/>
<organism>
    <name type="scientific">Mus musculus</name>
    <name type="common">Mouse</name>
    <dbReference type="NCBI Taxonomy" id="10090"/>
    <lineage>
        <taxon>Eukaryota</taxon>
        <taxon>Metazoa</taxon>
        <taxon>Chordata</taxon>
        <taxon>Craniata</taxon>
        <taxon>Vertebrata</taxon>
        <taxon>Euteleostomi</taxon>
        <taxon>Mammalia</taxon>
        <taxon>Eutheria</taxon>
        <taxon>Euarchontoglires</taxon>
        <taxon>Glires</taxon>
        <taxon>Rodentia</taxon>
        <taxon>Myomorpha</taxon>
        <taxon>Muroidea</taxon>
        <taxon>Muridae</taxon>
        <taxon>Murinae</taxon>
        <taxon>Mus</taxon>
        <taxon>Mus</taxon>
    </lineage>
</organism>
<protein>
    <recommendedName>
        <fullName evidence="1">HUWE1-associated protein modifying stress responses 2</fullName>
    </recommendedName>
</protein>
<reference key="1">
    <citation type="journal article" date="2009" name="PLoS Biol.">
        <title>Lineage-specific biology revealed by a finished genome assembly of the mouse.</title>
        <authorList>
            <person name="Church D.M."/>
            <person name="Goodstadt L."/>
            <person name="Hillier L.W."/>
            <person name="Zody M.C."/>
            <person name="Goldstein S."/>
            <person name="She X."/>
            <person name="Bult C.J."/>
            <person name="Agarwala R."/>
            <person name="Cherry J.L."/>
            <person name="DiCuccio M."/>
            <person name="Hlavina W."/>
            <person name="Kapustin Y."/>
            <person name="Meric P."/>
            <person name="Maglott D."/>
            <person name="Birtle Z."/>
            <person name="Marques A.C."/>
            <person name="Graves T."/>
            <person name="Zhou S."/>
            <person name="Teague B."/>
            <person name="Potamousis K."/>
            <person name="Churas C."/>
            <person name="Place M."/>
            <person name="Herschleb J."/>
            <person name="Runnheim R."/>
            <person name="Forrest D."/>
            <person name="Amos-Landgraf J."/>
            <person name="Schwartz D.C."/>
            <person name="Cheng Z."/>
            <person name="Lindblad-Toh K."/>
            <person name="Eichler E.E."/>
            <person name="Ponting C.P."/>
        </authorList>
    </citation>
    <scope>NUCLEOTIDE SEQUENCE [LARGE SCALE GENOMIC DNA]</scope>
    <source>
        <strain>C57BL/6J</strain>
    </source>
</reference>
<dbReference type="EMBL" id="AL669898">
    <property type="status" value="NOT_ANNOTATED_CDS"/>
    <property type="molecule type" value="Genomic_DNA"/>
</dbReference>
<dbReference type="RefSeq" id="NP_001258477.1">
    <property type="nucleotide sequence ID" value="NM_001271548.1"/>
</dbReference>
<dbReference type="FunCoup" id="A0A804C8T0">
    <property type="interactions" value="45"/>
</dbReference>
<dbReference type="GlyGen" id="A0A804C8T0">
    <property type="glycosylation" value="1 site"/>
</dbReference>
<dbReference type="Ensembl" id="ENSMUST00000117865.3">
    <property type="protein sequence ID" value="ENSMUSP00001091660.1"/>
    <property type="gene ID" value="ENSMUSG00000082226.5"/>
</dbReference>
<dbReference type="GeneID" id="279618"/>
<dbReference type="KEGG" id="mmu:279618"/>
<dbReference type="AGR" id="MGI:2685561"/>
<dbReference type="MGI" id="MGI:2685561">
    <property type="gene designation" value="Gm715"/>
</dbReference>
<dbReference type="GeneTree" id="ENSGT00390000002886"/>
<dbReference type="InParanoid" id="A0A804C8T0"/>
<dbReference type="OMA" id="PGLSMWD"/>
<dbReference type="OrthoDB" id="5823474at2759"/>
<dbReference type="PRO" id="PR:A0A804C8T0"/>
<dbReference type="Proteomes" id="UP000000589">
    <property type="component" value="Chromosome X"/>
</dbReference>
<dbReference type="Bgee" id="ENSMUSG00000082226">
    <property type="expression patterns" value="Expressed in primary oocyte and 96 other cell types or tissues"/>
</dbReference>
<dbReference type="GO" id="GO:0005634">
    <property type="term" value="C:nucleus"/>
    <property type="evidence" value="ECO:0000250"/>
    <property type="project" value="UniProtKB"/>
</dbReference>
<dbReference type="GO" id="GO:0031625">
    <property type="term" value="F:ubiquitin protein ligase binding"/>
    <property type="evidence" value="ECO:0000250"/>
    <property type="project" value="UniProtKB"/>
</dbReference>
<dbReference type="GO" id="GO:0050821">
    <property type="term" value="P:protein stabilization"/>
    <property type="evidence" value="ECO:0000250"/>
    <property type="project" value="UniProtKB"/>
</dbReference>
<dbReference type="InterPro" id="IPR040308">
    <property type="entry name" value="HAPR1"/>
</dbReference>
<dbReference type="InterPro" id="IPR029196">
    <property type="entry name" value="HAPSTR1-like"/>
</dbReference>
<dbReference type="PANTHER" id="PTHR31624:SF2">
    <property type="entry name" value="HUWE1-ASSOCIATED PROTEIN MODIFYING STRESS RESPONSES 2"/>
    <property type="match status" value="1"/>
</dbReference>
<dbReference type="PANTHER" id="PTHR31624">
    <property type="entry name" value="UPF0472 PROTEIN C16ORF72"/>
    <property type="match status" value="1"/>
</dbReference>
<dbReference type="Pfam" id="PF15251">
    <property type="entry name" value="TAPR1-like"/>
    <property type="match status" value="1"/>
</dbReference>
<name>HAPR2_MOUSE</name>
<feature type="chain" id="PRO_0000457926" description="HUWE1-associated protein modifying stress responses 2">
    <location>
        <begin position="1"/>
        <end position="276"/>
    </location>
</feature>
<feature type="region of interest" description="Disordered" evidence="2">
    <location>
        <begin position="146"/>
        <end position="182"/>
    </location>
</feature>
<feature type="region of interest" description="Disordered" evidence="2">
    <location>
        <begin position="204"/>
        <end position="238"/>
    </location>
</feature>
<feature type="region of interest" description="Disordered" evidence="2">
    <location>
        <begin position="252"/>
        <end position="276"/>
    </location>
</feature>
<feature type="region of interest" description="Nuclear localization signal" evidence="1">
    <location>
        <begin position="252"/>
        <end position="276"/>
    </location>
</feature>
<feature type="compositionally biased region" description="Pro residues" evidence="2">
    <location>
        <begin position="149"/>
        <end position="165"/>
    </location>
</feature>
<feature type="compositionally biased region" description="Low complexity" evidence="2">
    <location>
        <begin position="166"/>
        <end position="179"/>
    </location>
</feature>
<feature type="compositionally biased region" description="Low complexity" evidence="2">
    <location>
        <begin position="208"/>
        <end position="219"/>
    </location>
</feature>
<evidence type="ECO:0000250" key="1">
    <source>
        <dbReference type="UniProtKB" id="A0A7P0TBJ1"/>
    </source>
</evidence>
<evidence type="ECO:0000256" key="2">
    <source>
        <dbReference type="SAM" id="MobiDB-lite"/>
    </source>
</evidence>
<evidence type="ECO:0000305" key="3"/>
<evidence type="ECO:0000312" key="4">
    <source>
        <dbReference type="MGI" id="MGI:2685561"/>
    </source>
</evidence>